<evidence type="ECO:0000250" key="1"/>
<evidence type="ECO:0000255" key="2">
    <source>
        <dbReference type="HAMAP-Rule" id="MF_00403"/>
    </source>
</evidence>
<evidence type="ECO:0000256" key="3">
    <source>
        <dbReference type="SAM" id="MobiDB-lite"/>
    </source>
</evidence>
<evidence type="ECO:0000305" key="4"/>
<comment type="function">
    <text evidence="2">With S4 and S5 plays an important role in translational accuracy.</text>
</comment>
<comment type="function">
    <text evidence="2">Interacts with and stabilizes bases of the 16S rRNA that are involved in tRNA selection in the A site and with the mRNA backbone. Located at the interface of the 30S and 50S subunits, it traverses the body of the 30S subunit contacting proteins on the other side and probably holding the rRNA structure together. The combined cluster of proteins S8, S12 and S17 appears to hold together the shoulder and platform of the 30S subunit.</text>
</comment>
<comment type="subunit">
    <text evidence="2">Part of the 30S ribosomal subunit. Contacts proteins S8 and S17. May interact with IF1 in the 30S initiation complex.</text>
</comment>
<comment type="similarity">
    <text evidence="2">Belongs to the universal ribosomal protein uS12 family.</text>
</comment>
<reference key="1">
    <citation type="journal article" date="2008" name="BMC Genomics">
        <title>Genomics of an extreme psychrophile, Psychromonas ingrahamii.</title>
        <authorList>
            <person name="Riley M."/>
            <person name="Staley J.T."/>
            <person name="Danchin A."/>
            <person name="Wang T.Z."/>
            <person name="Brettin T.S."/>
            <person name="Hauser L.J."/>
            <person name="Land M.L."/>
            <person name="Thompson L.S."/>
        </authorList>
    </citation>
    <scope>NUCLEOTIDE SEQUENCE [LARGE SCALE GENOMIC DNA]</scope>
    <source>
        <strain>DSM 17664 / CCUG 51855 / 37</strain>
    </source>
</reference>
<keyword id="KW-0488">Methylation</keyword>
<keyword id="KW-1185">Reference proteome</keyword>
<keyword id="KW-0687">Ribonucleoprotein</keyword>
<keyword id="KW-0689">Ribosomal protein</keyword>
<keyword id="KW-0694">RNA-binding</keyword>
<keyword id="KW-0699">rRNA-binding</keyword>
<keyword id="KW-0820">tRNA-binding</keyword>
<name>RS12_PSYIN</name>
<sequence length="124" mass="13669">MATISQLVRNPRKDKVQKTSVPALEACPQKRGVCTRVYTTTPKKPNSAMRKVARVRLTNGFEVTSYIGGEGHNLQEHSVILIRGGRVKDLPGVRYHTVRGALDTSGVTARRKGRSKYGAKRPKA</sequence>
<protein>
    <recommendedName>
        <fullName evidence="2">Small ribosomal subunit protein uS12</fullName>
    </recommendedName>
    <alternativeName>
        <fullName evidence="4">30S ribosomal protein S12</fullName>
    </alternativeName>
</protein>
<feature type="chain" id="PRO_0000296021" description="Small ribosomal subunit protein uS12">
    <location>
        <begin position="1"/>
        <end position="124"/>
    </location>
</feature>
<feature type="region of interest" description="Disordered" evidence="3">
    <location>
        <begin position="1"/>
        <end position="20"/>
    </location>
</feature>
<feature type="region of interest" description="Disordered" evidence="3">
    <location>
        <begin position="104"/>
        <end position="124"/>
    </location>
</feature>
<feature type="compositionally biased region" description="Basic residues" evidence="3">
    <location>
        <begin position="109"/>
        <end position="124"/>
    </location>
</feature>
<feature type="modified residue" description="3-methylthioaspartic acid" evidence="1">
    <location>
        <position position="89"/>
    </location>
</feature>
<proteinExistence type="inferred from homology"/>
<organism>
    <name type="scientific">Psychromonas ingrahamii (strain DSM 17664 / CCUG 51855 / 37)</name>
    <dbReference type="NCBI Taxonomy" id="357804"/>
    <lineage>
        <taxon>Bacteria</taxon>
        <taxon>Pseudomonadati</taxon>
        <taxon>Pseudomonadota</taxon>
        <taxon>Gammaproteobacteria</taxon>
        <taxon>Alteromonadales</taxon>
        <taxon>Psychromonadaceae</taxon>
        <taxon>Psychromonas</taxon>
    </lineage>
</organism>
<accession>A1T059</accession>
<gene>
    <name evidence="2" type="primary">rpsL</name>
    <name type="ordered locus">Ping_3440</name>
</gene>
<dbReference type="EMBL" id="CP000510">
    <property type="protein sequence ID" value="ABM05124.1"/>
    <property type="molecule type" value="Genomic_DNA"/>
</dbReference>
<dbReference type="RefSeq" id="WP_011771676.1">
    <property type="nucleotide sequence ID" value="NC_008709.1"/>
</dbReference>
<dbReference type="SMR" id="A1T059"/>
<dbReference type="STRING" id="357804.Ping_3440"/>
<dbReference type="KEGG" id="pin:Ping_3440"/>
<dbReference type="eggNOG" id="COG0048">
    <property type="taxonomic scope" value="Bacteria"/>
</dbReference>
<dbReference type="HOGENOM" id="CLU_104295_1_2_6"/>
<dbReference type="OrthoDB" id="9802366at2"/>
<dbReference type="Proteomes" id="UP000000639">
    <property type="component" value="Chromosome"/>
</dbReference>
<dbReference type="GO" id="GO:0015935">
    <property type="term" value="C:small ribosomal subunit"/>
    <property type="evidence" value="ECO:0007669"/>
    <property type="project" value="InterPro"/>
</dbReference>
<dbReference type="GO" id="GO:0019843">
    <property type="term" value="F:rRNA binding"/>
    <property type="evidence" value="ECO:0007669"/>
    <property type="project" value="UniProtKB-UniRule"/>
</dbReference>
<dbReference type="GO" id="GO:0003735">
    <property type="term" value="F:structural constituent of ribosome"/>
    <property type="evidence" value="ECO:0007669"/>
    <property type="project" value="InterPro"/>
</dbReference>
<dbReference type="GO" id="GO:0000049">
    <property type="term" value="F:tRNA binding"/>
    <property type="evidence" value="ECO:0007669"/>
    <property type="project" value="UniProtKB-UniRule"/>
</dbReference>
<dbReference type="GO" id="GO:0006412">
    <property type="term" value="P:translation"/>
    <property type="evidence" value="ECO:0007669"/>
    <property type="project" value="UniProtKB-UniRule"/>
</dbReference>
<dbReference type="CDD" id="cd03368">
    <property type="entry name" value="Ribosomal_S12"/>
    <property type="match status" value="1"/>
</dbReference>
<dbReference type="FunFam" id="2.40.50.140:FF:000001">
    <property type="entry name" value="30S ribosomal protein S12"/>
    <property type="match status" value="1"/>
</dbReference>
<dbReference type="Gene3D" id="2.40.50.140">
    <property type="entry name" value="Nucleic acid-binding proteins"/>
    <property type="match status" value="1"/>
</dbReference>
<dbReference type="HAMAP" id="MF_00403_B">
    <property type="entry name" value="Ribosomal_uS12_B"/>
    <property type="match status" value="1"/>
</dbReference>
<dbReference type="InterPro" id="IPR012340">
    <property type="entry name" value="NA-bd_OB-fold"/>
</dbReference>
<dbReference type="InterPro" id="IPR006032">
    <property type="entry name" value="Ribosomal_uS12"/>
</dbReference>
<dbReference type="InterPro" id="IPR005679">
    <property type="entry name" value="Ribosomal_uS12_bac"/>
</dbReference>
<dbReference type="NCBIfam" id="TIGR00981">
    <property type="entry name" value="rpsL_bact"/>
    <property type="match status" value="1"/>
</dbReference>
<dbReference type="PANTHER" id="PTHR11652">
    <property type="entry name" value="30S RIBOSOMAL PROTEIN S12 FAMILY MEMBER"/>
    <property type="match status" value="1"/>
</dbReference>
<dbReference type="Pfam" id="PF00164">
    <property type="entry name" value="Ribosom_S12_S23"/>
    <property type="match status" value="1"/>
</dbReference>
<dbReference type="PIRSF" id="PIRSF002133">
    <property type="entry name" value="Ribosomal_S12/S23"/>
    <property type="match status" value="1"/>
</dbReference>
<dbReference type="PRINTS" id="PR01034">
    <property type="entry name" value="RIBOSOMALS12"/>
</dbReference>
<dbReference type="SUPFAM" id="SSF50249">
    <property type="entry name" value="Nucleic acid-binding proteins"/>
    <property type="match status" value="1"/>
</dbReference>
<dbReference type="PROSITE" id="PS00055">
    <property type="entry name" value="RIBOSOMAL_S12"/>
    <property type="match status" value="1"/>
</dbReference>